<feature type="chain" id="PRO_0000197195" description="N-acetylglucosaminyltransferase">
    <location>
        <begin position="1"/>
        <end position="413"/>
    </location>
</feature>
<feature type="sequence conflict" description="In Ref. 1; CAA51774." evidence="1" ref="1">
    <original>Q</original>
    <variation>E</variation>
    <location>
        <position position="124"/>
    </location>
</feature>
<proteinExistence type="inferred from homology"/>
<comment type="function">
    <text>Involved in the synthesis of Nod factor, a sulfated N-acyl-beta-1,4-tetrasaccharide of N-acetylglucosamine which initiates a series of events in the host plant species leading eventually to nodulation.</text>
</comment>
<comment type="subcellular location">
    <subcellularLocation>
        <location evidence="1">Cell membrane</location>
        <topology evidence="1">Peripheral membrane protein</topology>
    </subcellularLocation>
</comment>
<comment type="similarity">
    <text evidence="1">Belongs to the NodC/HAS family.</text>
</comment>
<accession>P50357</accession>
<organism>
    <name type="scientific">Sinorhizobium fredii (strain NBRC 101917 / NGR234)</name>
    <dbReference type="NCBI Taxonomy" id="394"/>
    <lineage>
        <taxon>Bacteria</taxon>
        <taxon>Pseudomonadati</taxon>
        <taxon>Pseudomonadota</taxon>
        <taxon>Alphaproteobacteria</taxon>
        <taxon>Hyphomicrobiales</taxon>
        <taxon>Rhizobiaceae</taxon>
        <taxon>Sinorhizobium/Ensifer group</taxon>
        <taxon>Sinorhizobium</taxon>
    </lineage>
</organism>
<dbReference type="EC" id="2.4.1.-"/>
<dbReference type="EMBL" id="X73362">
    <property type="protein sequence ID" value="CAA51774.1"/>
    <property type="molecule type" value="Genomic_DNA"/>
</dbReference>
<dbReference type="EMBL" id="U00090">
    <property type="protein sequence ID" value="AAB91695.1"/>
    <property type="molecule type" value="Genomic_DNA"/>
</dbReference>
<dbReference type="PIR" id="S34305">
    <property type="entry name" value="S34305"/>
</dbReference>
<dbReference type="RefSeq" id="NP_443883.1">
    <property type="nucleotide sequence ID" value="NC_000914.2"/>
</dbReference>
<dbReference type="RefSeq" id="WP_010875357.1">
    <property type="nucleotide sequence ID" value="NC_000914.2"/>
</dbReference>
<dbReference type="SMR" id="P50357"/>
<dbReference type="CAZy" id="GT2">
    <property type="family name" value="Glycosyltransferase Family 2"/>
</dbReference>
<dbReference type="KEGG" id="rhi:NGR_a03430"/>
<dbReference type="PATRIC" id="fig|394.7.peg.352"/>
<dbReference type="eggNOG" id="COG1215">
    <property type="taxonomic scope" value="Bacteria"/>
</dbReference>
<dbReference type="HOGENOM" id="CLU_029695_4_2_5"/>
<dbReference type="OrthoDB" id="276604at2"/>
<dbReference type="Proteomes" id="UP000001054">
    <property type="component" value="Plasmid pNGR234a"/>
</dbReference>
<dbReference type="GO" id="GO:0005886">
    <property type="term" value="C:plasma membrane"/>
    <property type="evidence" value="ECO:0007669"/>
    <property type="project" value="UniProtKB-SubCell"/>
</dbReference>
<dbReference type="GO" id="GO:0050501">
    <property type="term" value="F:hyaluronan synthase activity"/>
    <property type="evidence" value="ECO:0007669"/>
    <property type="project" value="TreeGrafter"/>
</dbReference>
<dbReference type="GO" id="GO:0085029">
    <property type="term" value="P:extracellular matrix assembly"/>
    <property type="evidence" value="ECO:0007669"/>
    <property type="project" value="TreeGrafter"/>
</dbReference>
<dbReference type="GO" id="GO:0030213">
    <property type="term" value="P:hyaluronan biosynthetic process"/>
    <property type="evidence" value="ECO:0007669"/>
    <property type="project" value="TreeGrafter"/>
</dbReference>
<dbReference type="CDD" id="cd06423">
    <property type="entry name" value="CESA_like"/>
    <property type="match status" value="1"/>
</dbReference>
<dbReference type="Gene3D" id="3.90.550.10">
    <property type="entry name" value="Spore Coat Polysaccharide Biosynthesis Protein SpsA, Chain A"/>
    <property type="match status" value="1"/>
</dbReference>
<dbReference type="InterPro" id="IPR026463">
    <property type="entry name" value="Chitooligosach_Synthase_NodC"/>
</dbReference>
<dbReference type="InterPro" id="IPR001173">
    <property type="entry name" value="Glyco_trans_2-like"/>
</dbReference>
<dbReference type="InterPro" id="IPR029044">
    <property type="entry name" value="Nucleotide-diphossugar_trans"/>
</dbReference>
<dbReference type="NCBIfam" id="TIGR04242">
    <property type="entry name" value="nodulat_NodC"/>
    <property type="match status" value="1"/>
</dbReference>
<dbReference type="PANTHER" id="PTHR22913">
    <property type="entry name" value="HYALURONAN SYNTHASE"/>
    <property type="match status" value="1"/>
</dbReference>
<dbReference type="PANTHER" id="PTHR22913:SF12">
    <property type="entry name" value="MANNURONAN SYNTHASE"/>
    <property type="match status" value="1"/>
</dbReference>
<dbReference type="Pfam" id="PF00535">
    <property type="entry name" value="Glycos_transf_2"/>
    <property type="match status" value="1"/>
</dbReference>
<dbReference type="SUPFAM" id="SSF53448">
    <property type="entry name" value="Nucleotide-diphospho-sugar transferases"/>
    <property type="match status" value="1"/>
</dbReference>
<gene>
    <name type="primary">nodC</name>
    <name type="ordered locus">NGR_a03430</name>
    <name type="ORF">y4hG</name>
</gene>
<sequence length="413" mass="44726">MDLLGTTGAVAISLYAALSTAYKGMQAIYALPTNTTAASTPVTGSGAPPSVDVIVPCYNEDPRALSACLASIAKQDYAGELRVYVVDDGSGNRNAIIPVHDHYACDPRFRFILMPKNVGKRKAQIVAIRESSGDLVLNVDSDTTIAPDVVTKLALKMYSPAVGAAMGQLTASNRSDTWLTRLIDMEYWLACNEERAAQARFGAVMCCCGPCAMYRRSALLLLLDKYETQLFRGRPSDFGEDRHLTILMLNAGFRTEYVPEAIAATVVPNSMGAYLRQQLRWARSTFRDTLLALRLLPGLDRYLTLDVIGQNLGPLLLALSVLTGLAQLALTATVPWSTILMIASMTMVRCGVAAFRARELRFLGFSLHTLLNVALLLPLKAYALCTLSNSDWLSRGSPAAAPNGVKDSPEPHC</sequence>
<reference key="1">
    <citation type="journal article" date="1994" name="Mol. Microbiol.">
        <title>Nod factors of Rhizobium are a key to the legume door.</title>
        <authorList>
            <person name="Relic B."/>
            <person name="Perret X."/>
            <person name="Estrada-Garcia M.T."/>
            <person name="Kopcinska J."/>
            <person name="Golinowski W."/>
            <person name="Krishnan H.B."/>
            <person name="Pueppke S.G."/>
            <person name="Broughton W.J."/>
        </authorList>
    </citation>
    <scope>NUCLEOTIDE SEQUENCE [GENOMIC DNA]</scope>
</reference>
<reference key="2">
    <citation type="journal article" date="1997" name="Nature">
        <title>Molecular basis of symbiosis between Rhizobium and legumes.</title>
        <authorList>
            <person name="Freiberg C.A."/>
            <person name="Fellay R."/>
            <person name="Bairoch A."/>
            <person name="Broughton W.J."/>
            <person name="Rosenthal A."/>
            <person name="Perret X."/>
        </authorList>
    </citation>
    <scope>NUCLEOTIDE SEQUENCE [LARGE SCALE GENOMIC DNA]</scope>
    <source>
        <strain>NBRC 101917 / NGR234</strain>
    </source>
</reference>
<reference key="3">
    <citation type="journal article" date="2009" name="Appl. Environ. Microbiol.">
        <title>Rhizobium sp. strain NGR234 possesses a remarkable number of secretion systems.</title>
        <authorList>
            <person name="Schmeisser C."/>
            <person name="Liesegang H."/>
            <person name="Krysciak D."/>
            <person name="Bakkou N."/>
            <person name="Le Quere A."/>
            <person name="Wollherr A."/>
            <person name="Heinemeyer I."/>
            <person name="Morgenstern B."/>
            <person name="Pommerening-Roeser A."/>
            <person name="Flores M."/>
            <person name="Palacios R."/>
            <person name="Brenner S."/>
            <person name="Gottschalk G."/>
            <person name="Schmitz R.A."/>
            <person name="Broughton W.J."/>
            <person name="Perret X."/>
            <person name="Strittmatter A.W."/>
            <person name="Streit W.R."/>
        </authorList>
    </citation>
    <scope>NUCLEOTIDE SEQUENCE [LARGE SCALE GENOMIC DNA]</scope>
    <source>
        <strain>NBRC 101917 / NGR234</strain>
    </source>
</reference>
<protein>
    <recommendedName>
        <fullName>N-acetylglucosaminyltransferase</fullName>
        <ecNumber>2.4.1.-</ecNumber>
    </recommendedName>
    <alternativeName>
        <fullName>Nodulation protein C</fullName>
    </alternativeName>
</protein>
<geneLocation type="plasmid">
    <name>sym pNGR234a</name>
</geneLocation>
<evidence type="ECO:0000305" key="1"/>
<keyword id="KW-1003">Cell membrane</keyword>
<keyword id="KW-0328">Glycosyltransferase</keyword>
<keyword id="KW-0472">Membrane</keyword>
<keyword id="KW-0536">Nodulation</keyword>
<keyword id="KW-0614">Plasmid</keyword>
<keyword id="KW-1185">Reference proteome</keyword>
<keyword id="KW-0808">Transferase</keyword>
<name>NODC_SINFN</name>